<accession>Q6AYE8</accession>
<accession>Q810F6</accession>
<accession>Q810F7</accession>
<accession>Q9QZG3</accession>
<feature type="signal peptide" evidence="3">
    <location>
        <begin position="1"/>
        <end position="39"/>
    </location>
</feature>
<feature type="propeptide" id="PRO_0000240290" evidence="3">
    <location>
        <begin position="40"/>
        <end position="111"/>
    </location>
</feature>
<feature type="chain" id="PRO_0000240291" description="Artemin">
    <location>
        <begin position="112"/>
        <end position="224"/>
    </location>
</feature>
<feature type="region of interest" description="Disordered" evidence="4">
    <location>
        <begin position="41"/>
        <end position="124"/>
    </location>
</feature>
<feature type="compositionally biased region" description="Pro residues" evidence="4">
    <location>
        <begin position="80"/>
        <end position="95"/>
    </location>
</feature>
<feature type="compositionally biased region" description="Low complexity" evidence="4">
    <location>
        <begin position="96"/>
        <end position="116"/>
    </location>
</feature>
<feature type="glycosylation site" description="N-linked (GlcNAc...) asparagine" evidence="3">
    <location>
        <position position="206"/>
    </location>
</feature>
<feature type="disulfide bond" evidence="1">
    <location>
        <begin position="127"/>
        <end position="192"/>
    </location>
</feature>
<feature type="disulfide bond" evidence="1">
    <location>
        <begin position="154"/>
        <end position="220"/>
    </location>
</feature>
<feature type="disulfide bond" evidence="1">
    <location>
        <begin position="158"/>
        <end position="222"/>
    </location>
</feature>
<feature type="disulfide bond" description="Interchain" evidence="1">
    <location>
        <position position="191"/>
    </location>
</feature>
<feature type="sequence conflict" description="In Ref. 3; AAF01241." evidence="7" ref="3">
    <original>D</original>
    <variation>G</variation>
    <location>
        <position position="174"/>
    </location>
</feature>
<comment type="function">
    <text evidence="1 2">Growth factor that supports the survival of sensory and sympathetic peripheral neurons in culture and also supports the survival of dopaminergic neurons of the ventral mid-brain. Acts by binding to its coreceptor, GFRA3, leading to autophosphorylation and activation of the RET receptor (By similarity). Strong attractant of gut hematopoietic cells thus promoting the formation Peyer's patch-like structures, a major component of the gut-associated lymphoid tissue (By similarity).</text>
</comment>
<comment type="subunit">
    <text evidence="1">Homodimer; disulfide-linked. Interacts with GFRA3 coreceptor and RET: forms a 2:2:2 ternary complex composed of ARTN ligand, GFRA3 and RET receptor.</text>
</comment>
<comment type="subcellular location">
    <subcellularLocation>
        <location evidence="2">Secreted</location>
    </subcellularLocation>
</comment>
<comment type="tissue specificity">
    <text evidence="5 6">Cochlea. Expressed at higher level in sesorineural epithelium than in the modiolus region or substantia nigra.</text>
</comment>
<comment type="developmental stage">
    <text evidence="6">Expressed during embryogenesis. At 14 dpc, not detected in the brain or spinal cord. A striking expression seen in the nerve roots but not in the developing neurons of the dorsal root ganglia. A significant expression also seen around the superior mesentric artery.</text>
</comment>
<comment type="similarity">
    <text evidence="7">Belongs to the TGF-beta family. GDNF subfamily.</text>
</comment>
<sequence>MELGLGEPTALSHCLRPRWQPALWPTLAALALLSSVTEASLDPMSRSPASRDVPSPVLAPPTDYLPGGHTAHLCSERALRPPPQSPQPAPPPPGPALQSPPAALRGARAARAGTRSSRARATDARGCRLRSQLVPVSALGLGHSSDELIRFRFCSGSCRRARSPHDLSLASLLDAGALRSPPGSRPISQPCCRPTRYEAVSFMDVNSTWRTVDHLSATACGCLG</sequence>
<reference key="1">
    <citation type="journal article" date="2004" name="Genome Res.">
        <title>The status, quality, and expansion of the NIH full-length cDNA project: the Mammalian Gene Collection (MGC).</title>
        <authorList>
            <consortium name="The MGC Project Team"/>
        </authorList>
    </citation>
    <scope>NUCLEOTIDE SEQUENCE [LARGE SCALE MRNA]</scope>
    <source>
        <tissue>Lung</tissue>
    </source>
</reference>
<reference key="2">
    <citation type="submission" date="2003-02" db="EMBL/GenBank/DDBJ databases">
        <authorList>
            <person name="Carmillo P."/>
            <person name="McAuliffe M."/>
            <person name="Tizard R."/>
            <person name="Cate R.L."/>
        </authorList>
    </citation>
    <scope>NUCLEOTIDE SEQUENCE [MRNA] OF 1-157 AND 184-224</scope>
    <source>
        <strain>Sprague-Dawley</strain>
        <tissue>Liver</tissue>
    </source>
</reference>
<reference key="3">
    <citation type="journal article" date="2000" name="Brain Res. Mol. Brain Res.">
        <title>Expression of the GDNF family members and their receptors in the mature rat cochlea.</title>
        <authorList>
            <person name="Stoever T."/>
            <person name="Gong T.-W.L."/>
            <person name="Cho Y."/>
            <person name="Altschuler R.A."/>
            <person name="Lomax M.I."/>
        </authorList>
    </citation>
    <scope>NUCLEOTIDE SEQUENCE [MRNA] OF 68-192</scope>
    <scope>TISSUE SPECIFICITY</scope>
    <source>
        <strain>Sprague-Dawley</strain>
        <tissue>Cochlea</tissue>
    </source>
</reference>
<reference key="4">
    <citation type="journal article" date="1998" name="Neuron">
        <title>Artemin, a novel member of the GDNF ligand family, supports peripheral and central neurons and signals through the GFRalpha3-RET receptor complex.</title>
        <authorList>
            <person name="Baloh R.H."/>
            <person name="Tansey M.G."/>
            <person name="Lampe P.A."/>
            <person name="Fahrner T.J."/>
            <person name="Enomoto H."/>
            <person name="Simburger K.S."/>
            <person name="Leitner M.L."/>
            <person name="Araki T."/>
            <person name="Johnson E.M. Jr."/>
            <person name="Milbrandt J."/>
        </authorList>
    </citation>
    <scope>TISSUE SPECIFICITY</scope>
    <scope>DEVELOPMENTAL STAGE</scope>
</reference>
<organism>
    <name type="scientific">Rattus norvegicus</name>
    <name type="common">Rat</name>
    <dbReference type="NCBI Taxonomy" id="10116"/>
    <lineage>
        <taxon>Eukaryota</taxon>
        <taxon>Metazoa</taxon>
        <taxon>Chordata</taxon>
        <taxon>Craniata</taxon>
        <taxon>Vertebrata</taxon>
        <taxon>Euteleostomi</taxon>
        <taxon>Mammalia</taxon>
        <taxon>Eutheria</taxon>
        <taxon>Euarchontoglires</taxon>
        <taxon>Glires</taxon>
        <taxon>Rodentia</taxon>
        <taxon>Myomorpha</taxon>
        <taxon>Muroidea</taxon>
        <taxon>Muridae</taxon>
        <taxon>Murinae</taxon>
        <taxon>Rattus</taxon>
    </lineage>
</organism>
<keyword id="KW-1015">Disulfide bond</keyword>
<keyword id="KW-0325">Glycoprotein</keyword>
<keyword id="KW-0339">Growth factor</keyword>
<keyword id="KW-1185">Reference proteome</keyword>
<keyword id="KW-0964">Secreted</keyword>
<keyword id="KW-0732">Signal</keyword>
<gene>
    <name type="primary">Artn</name>
</gene>
<name>ARTN_RAT</name>
<dbReference type="EMBL" id="BC079078">
    <property type="protein sequence ID" value="AAH79078.1"/>
    <property type="molecule type" value="mRNA"/>
</dbReference>
<dbReference type="EMBL" id="AY230412">
    <property type="protein sequence ID" value="AAO73543.1"/>
    <property type="molecule type" value="mRNA"/>
</dbReference>
<dbReference type="EMBL" id="AY230413">
    <property type="protein sequence ID" value="AAO73544.1"/>
    <property type="molecule type" value="mRNA"/>
</dbReference>
<dbReference type="EMBL" id="AF184919">
    <property type="protein sequence ID" value="AAF01241.1"/>
    <property type="molecule type" value="mRNA"/>
</dbReference>
<dbReference type="RefSeq" id="NP_445849.1">
    <property type="nucleotide sequence ID" value="NM_053397.1"/>
</dbReference>
<dbReference type="RefSeq" id="XP_006238747.1">
    <property type="nucleotide sequence ID" value="XM_006238685.3"/>
</dbReference>
<dbReference type="RefSeq" id="XP_006238749.1">
    <property type="nucleotide sequence ID" value="XM_006238687.3"/>
</dbReference>
<dbReference type="RefSeq" id="XP_017448983.1">
    <property type="nucleotide sequence ID" value="XM_017593494.1"/>
</dbReference>
<dbReference type="RefSeq" id="XP_038966225.1">
    <property type="nucleotide sequence ID" value="XM_039110297.2"/>
</dbReference>
<dbReference type="RefSeq" id="XP_038966227.1">
    <property type="nucleotide sequence ID" value="XM_039110299.2"/>
</dbReference>
<dbReference type="SMR" id="Q6AYE8"/>
<dbReference type="FunCoup" id="Q6AYE8">
    <property type="interactions" value="280"/>
</dbReference>
<dbReference type="STRING" id="10116.ENSRNOP00000026852"/>
<dbReference type="GlyCosmos" id="Q6AYE8">
    <property type="glycosylation" value="1 site, No reported glycans"/>
</dbReference>
<dbReference type="GlyGen" id="Q6AYE8">
    <property type="glycosylation" value="1 site"/>
</dbReference>
<dbReference type="PhosphoSitePlus" id="Q6AYE8"/>
<dbReference type="PaxDb" id="10116-ENSRNOP00000026852"/>
<dbReference type="Ensembl" id="ENSRNOT00000026852.4">
    <property type="protein sequence ID" value="ENSRNOP00000026852.2"/>
    <property type="gene ID" value="ENSRNOG00000019842.4"/>
</dbReference>
<dbReference type="GeneID" id="362572"/>
<dbReference type="KEGG" id="rno:362572"/>
<dbReference type="UCSC" id="RGD:621427">
    <property type="organism name" value="rat"/>
</dbReference>
<dbReference type="AGR" id="RGD:621427"/>
<dbReference type="CTD" id="9048"/>
<dbReference type="RGD" id="621427">
    <property type="gene designation" value="Artn"/>
</dbReference>
<dbReference type="eggNOG" id="ENOG502S53F">
    <property type="taxonomic scope" value="Eukaryota"/>
</dbReference>
<dbReference type="GeneTree" id="ENSGT00950000182993"/>
<dbReference type="HOGENOM" id="CLU_102221_0_0_1"/>
<dbReference type="InParanoid" id="Q6AYE8"/>
<dbReference type="OMA" id="VTQPCCR"/>
<dbReference type="PhylomeDB" id="Q6AYE8"/>
<dbReference type="TreeFam" id="TF332366"/>
<dbReference type="Reactome" id="R-RNO-5673001">
    <property type="pathway name" value="RAF/MAP kinase cascade"/>
</dbReference>
<dbReference type="Reactome" id="R-RNO-8853659">
    <property type="pathway name" value="RET signaling"/>
</dbReference>
<dbReference type="PRO" id="PR:Q6AYE8"/>
<dbReference type="Proteomes" id="UP000002494">
    <property type="component" value="Chromosome 5"/>
</dbReference>
<dbReference type="Bgee" id="ENSRNOG00000019842">
    <property type="expression patterns" value="Expressed in stomach and 11 other cell types or tissues"/>
</dbReference>
<dbReference type="GO" id="GO:0005615">
    <property type="term" value="C:extracellular space"/>
    <property type="evidence" value="ECO:0000266"/>
    <property type="project" value="RGD"/>
</dbReference>
<dbReference type="GO" id="GO:0030116">
    <property type="term" value="F:glial cell-derived neurotrophic factor receptor binding"/>
    <property type="evidence" value="ECO:0007669"/>
    <property type="project" value="InterPro"/>
</dbReference>
<dbReference type="GO" id="GO:0008083">
    <property type="term" value="F:growth factor activity"/>
    <property type="evidence" value="ECO:0000250"/>
    <property type="project" value="UniProtKB"/>
</dbReference>
<dbReference type="GO" id="GO:0030971">
    <property type="term" value="F:receptor tyrosine kinase binding"/>
    <property type="evidence" value="ECO:0007669"/>
    <property type="project" value="InterPro"/>
</dbReference>
<dbReference type="GO" id="GO:0005102">
    <property type="term" value="F:signaling receptor binding"/>
    <property type="evidence" value="ECO:0000266"/>
    <property type="project" value="RGD"/>
</dbReference>
<dbReference type="GO" id="GO:0007411">
    <property type="term" value="P:axon guidance"/>
    <property type="evidence" value="ECO:0000266"/>
    <property type="project" value="RGD"/>
</dbReference>
<dbReference type="GO" id="GO:0035860">
    <property type="term" value="P:glial cell-derived neurotrophic factor receptor signaling pathway"/>
    <property type="evidence" value="ECO:0000266"/>
    <property type="project" value="RGD"/>
</dbReference>
<dbReference type="GO" id="GO:0050930">
    <property type="term" value="P:induction of positive chemotaxis"/>
    <property type="evidence" value="ECO:0000266"/>
    <property type="project" value="RGD"/>
</dbReference>
<dbReference type="GO" id="GO:0097021">
    <property type="term" value="P:lymphocyte migration into lymphoid organs"/>
    <property type="evidence" value="ECO:0000266"/>
    <property type="project" value="RGD"/>
</dbReference>
<dbReference type="GO" id="GO:0007422">
    <property type="term" value="P:peripheral nervous system development"/>
    <property type="evidence" value="ECO:0000270"/>
    <property type="project" value="RGD"/>
</dbReference>
<dbReference type="GO" id="GO:0061146">
    <property type="term" value="P:Peyer's patch morphogenesis"/>
    <property type="evidence" value="ECO:0000266"/>
    <property type="project" value="RGD"/>
</dbReference>
<dbReference type="CDD" id="cd19381">
    <property type="entry name" value="TGF_beta_Artemin"/>
    <property type="match status" value="1"/>
</dbReference>
<dbReference type="FunFam" id="2.10.90.10:FF:000032">
    <property type="entry name" value="Artemin"/>
    <property type="match status" value="1"/>
</dbReference>
<dbReference type="Gene3D" id="2.10.90.10">
    <property type="entry name" value="Cystine-knot cytokines"/>
    <property type="match status" value="1"/>
</dbReference>
<dbReference type="InterPro" id="IPR029034">
    <property type="entry name" value="Cystine-knot_cytokine"/>
</dbReference>
<dbReference type="InterPro" id="IPR043401">
    <property type="entry name" value="GDNF_fam"/>
</dbReference>
<dbReference type="InterPro" id="IPR001839">
    <property type="entry name" value="TGF-b_C"/>
</dbReference>
<dbReference type="PANTHER" id="PTHR12173:SF9">
    <property type="entry name" value="ARTEMIN"/>
    <property type="match status" value="1"/>
</dbReference>
<dbReference type="PANTHER" id="PTHR12173">
    <property type="entry name" value="GDNF SUBFAMILY OF TGF-BETA FAMILY"/>
    <property type="match status" value="1"/>
</dbReference>
<dbReference type="Pfam" id="PF00019">
    <property type="entry name" value="TGF_beta"/>
    <property type="match status" value="1"/>
</dbReference>
<dbReference type="SUPFAM" id="SSF57501">
    <property type="entry name" value="Cystine-knot cytokines"/>
    <property type="match status" value="1"/>
</dbReference>
<dbReference type="PROSITE" id="PS51362">
    <property type="entry name" value="TGF_BETA_2"/>
    <property type="match status" value="1"/>
</dbReference>
<proteinExistence type="evidence at transcript level"/>
<evidence type="ECO:0000250" key="1">
    <source>
        <dbReference type="UniProtKB" id="Q5T4W7"/>
    </source>
</evidence>
<evidence type="ECO:0000250" key="2">
    <source>
        <dbReference type="UniProtKB" id="Q9Z0L2"/>
    </source>
</evidence>
<evidence type="ECO:0000255" key="3"/>
<evidence type="ECO:0000256" key="4">
    <source>
        <dbReference type="SAM" id="MobiDB-lite"/>
    </source>
</evidence>
<evidence type="ECO:0000269" key="5">
    <source>
    </source>
</evidence>
<evidence type="ECO:0000269" key="6">
    <source>
    </source>
</evidence>
<evidence type="ECO:0000305" key="7"/>
<protein>
    <recommendedName>
        <fullName>Artemin</fullName>
    </recommendedName>
</protein>